<gene>
    <name type="primary">ROM1</name>
</gene>
<keyword id="KW-0130">Cell adhesion</keyword>
<keyword id="KW-0966">Cell projection</keyword>
<keyword id="KW-1015">Disulfide bond</keyword>
<keyword id="KW-0472">Membrane</keyword>
<keyword id="KW-1185">Reference proteome</keyword>
<keyword id="KW-0716">Sensory transduction</keyword>
<keyword id="KW-0812">Transmembrane</keyword>
<keyword id="KW-1133">Transmembrane helix</keyword>
<keyword id="KW-0844">Vision</keyword>
<evidence type="ECO:0000250" key="1">
    <source>
        <dbReference type="UniProtKB" id="P32958"/>
    </source>
</evidence>
<evidence type="ECO:0000255" key="2"/>
<evidence type="ECO:0000256" key="3">
    <source>
        <dbReference type="SAM" id="MobiDB-lite"/>
    </source>
</evidence>
<evidence type="ECO:0000269" key="4">
    <source>
    </source>
</evidence>
<evidence type="ECO:0000269" key="5">
    <source>
    </source>
</evidence>
<evidence type="ECO:0000269" key="6">
    <source>
    </source>
</evidence>
<evidence type="ECO:0000269" key="7">
    <source>
    </source>
</evidence>
<evidence type="ECO:0000305" key="8"/>
<reference key="1">
    <citation type="submission" date="1996-04" db="EMBL/GenBank/DDBJ databases">
        <authorList>
            <person name="Wada H."/>
            <person name="Murakami A."/>
            <person name="Ito J."/>
            <person name="Okisaka S."/>
        </authorList>
    </citation>
    <scope>NUCLEOTIDE SEQUENCE [MRNA]</scope>
</reference>
<reference key="2">
    <citation type="journal article" date="1996" name="Invest. Ophthalmol. Vis. Sci.">
        <title>Molecular cloning, membrane topology, and localization of bovine rom-1 in rod and cone photoreceptor cells.</title>
        <authorList>
            <person name="Moritz O.L."/>
            <person name="Molday R.S."/>
        </authorList>
    </citation>
    <scope>NUCLEOTIDE SEQUENCE [MRNA]</scope>
    <scope>SUBCELLULAR LOCATION</scope>
    <scope>TISSUE SPECIFICITY</scope>
    <source>
        <tissue>Retina</tissue>
    </source>
</reference>
<reference key="3">
    <citation type="submission" date="2006-06" db="EMBL/GenBank/DDBJ databases">
        <authorList>
            <consortium name="NIH - Mammalian Gene Collection (MGC) project"/>
        </authorList>
    </citation>
    <scope>NUCLEOTIDE SEQUENCE [LARGE SCALE MRNA]</scope>
    <source>
        <strain>Hereford</strain>
        <tissue>Hippocampus</tissue>
    </source>
</reference>
<reference key="4">
    <citation type="journal article" date="1992" name="Neuron">
        <title>Cloning of the cDNA for a novel photoreceptor membrane protein (rom-1) identifies a disk rim protein family implicated in human retinopathies.</title>
        <authorList>
            <person name="Bascom R.A."/>
            <person name="Manara S."/>
            <person name="Collins L."/>
            <person name="Molday R.S."/>
            <person name="Kalnins V.I."/>
            <person name="McInnes R.R."/>
        </authorList>
    </citation>
    <scope>SUBUNIT</scope>
    <scope>INTERACTION WITH PRPH2</scope>
</reference>
<reference key="5">
    <citation type="journal article" date="2000" name="J. Biol. Chem.">
        <title>Disulfide-mediated oligomerization of Peripherin/Rds and Rom-1 in photoreceptor disk membranes. Implications for photoreceptor outer segment morphogenesis and degeneration.</title>
        <authorList>
            <person name="Loewen C.J."/>
            <person name="Molday R.S."/>
        </authorList>
    </citation>
    <scope>SUBUNIT</scope>
    <scope>INTERACTION WITH PRPH2</scope>
    <scope>SUBCELLULAR LOCATION</scope>
    <scope>TISSUE SPECIFICITY</scope>
</reference>
<reference key="6">
    <citation type="journal article" date="2013" name="J. Biol. Chem.">
        <title>Structural and functional analysis of the native peripherin-ROM1 complex isolated from photoreceptor cells.</title>
        <authorList>
            <person name="Kevany B.M."/>
            <person name="Tsybovsky Y."/>
            <person name="Campuzano I.D."/>
            <person name="Schnier P.D."/>
            <person name="Engel A."/>
            <person name="Palczewski K."/>
        </authorList>
    </citation>
    <scope>FUNCTION</scope>
    <scope>INTERACTION WITH PRPH2</scope>
</reference>
<dbReference type="EMBL" id="D83385">
    <property type="protein sequence ID" value="BAA11900.1"/>
    <property type="molecule type" value="mRNA"/>
</dbReference>
<dbReference type="EMBL" id="U72027">
    <property type="protein sequence ID" value="AAB17187.1"/>
    <property type="molecule type" value="mRNA"/>
</dbReference>
<dbReference type="EMBL" id="BC118152">
    <property type="protein sequence ID" value="AAI18153.1"/>
    <property type="molecule type" value="mRNA"/>
</dbReference>
<dbReference type="RefSeq" id="NP_776599.2">
    <property type="nucleotide sequence ID" value="NM_174174.3"/>
</dbReference>
<dbReference type="RefSeq" id="XP_024842738.1">
    <property type="nucleotide sequence ID" value="XM_024986970.2"/>
</dbReference>
<dbReference type="SMR" id="P52205"/>
<dbReference type="FunCoup" id="P52205">
    <property type="interactions" value="54"/>
</dbReference>
<dbReference type="IntAct" id="P52205">
    <property type="interactions" value="1"/>
</dbReference>
<dbReference type="MINT" id="P52205"/>
<dbReference type="STRING" id="9913.ENSBTAP00000001574"/>
<dbReference type="PaxDb" id="9913-ENSBTAP00000001574"/>
<dbReference type="Ensembl" id="ENSBTAT00000001574.5">
    <property type="protein sequence ID" value="ENSBTAP00000001574.3"/>
    <property type="gene ID" value="ENSBTAG00000001188.5"/>
</dbReference>
<dbReference type="GeneID" id="281465"/>
<dbReference type="KEGG" id="bta:281465"/>
<dbReference type="CTD" id="6094"/>
<dbReference type="VEuPathDB" id="HostDB:ENSBTAG00000001188"/>
<dbReference type="VGNC" id="VGNC:34084">
    <property type="gene designation" value="ROM1"/>
</dbReference>
<dbReference type="eggNOG" id="KOG3882">
    <property type="taxonomic scope" value="Eukaryota"/>
</dbReference>
<dbReference type="GeneTree" id="ENSGT00940000159921"/>
<dbReference type="HOGENOM" id="CLU_068903_0_0_1"/>
<dbReference type="InParanoid" id="P52205"/>
<dbReference type="OMA" id="AARYPPW"/>
<dbReference type="OrthoDB" id="9836210at2759"/>
<dbReference type="TreeFam" id="TF331684"/>
<dbReference type="Proteomes" id="UP000009136">
    <property type="component" value="Chromosome 29"/>
</dbReference>
<dbReference type="Bgee" id="ENSBTAG00000001188">
    <property type="expression patterns" value="Expressed in retina and 102 other cell types or tissues"/>
</dbReference>
<dbReference type="GO" id="GO:0042995">
    <property type="term" value="C:cell projection"/>
    <property type="evidence" value="ECO:0007669"/>
    <property type="project" value="UniProtKB-KW"/>
</dbReference>
<dbReference type="GO" id="GO:0005886">
    <property type="term" value="C:plasma membrane"/>
    <property type="evidence" value="ECO:0000318"/>
    <property type="project" value="GO_Central"/>
</dbReference>
<dbReference type="GO" id="GO:0007155">
    <property type="term" value="P:cell adhesion"/>
    <property type="evidence" value="ECO:0007669"/>
    <property type="project" value="UniProtKB-KW"/>
</dbReference>
<dbReference type="GO" id="GO:0007601">
    <property type="term" value="P:visual perception"/>
    <property type="evidence" value="ECO:0007669"/>
    <property type="project" value="UniProtKB-KW"/>
</dbReference>
<dbReference type="CDD" id="cd03162">
    <property type="entry name" value="peripherin_like_LEL"/>
    <property type="match status" value="1"/>
</dbReference>
<dbReference type="FunFam" id="1.10.1450.10:FF:000002">
    <property type="entry name" value="Retinal outer segment membrane protein 1"/>
    <property type="match status" value="1"/>
</dbReference>
<dbReference type="Gene3D" id="1.10.1450.10">
    <property type="entry name" value="Tetraspanin"/>
    <property type="match status" value="1"/>
</dbReference>
<dbReference type="InterPro" id="IPR000830">
    <property type="entry name" value="Peripherin/rom-1"/>
</dbReference>
<dbReference type="InterPro" id="IPR018498">
    <property type="entry name" value="Peripherin/rom-1_CS"/>
</dbReference>
<dbReference type="InterPro" id="IPR042026">
    <property type="entry name" value="Peripherin_LEL"/>
</dbReference>
<dbReference type="InterPro" id="IPR018499">
    <property type="entry name" value="Tetraspanin/Peripherin"/>
</dbReference>
<dbReference type="InterPro" id="IPR008952">
    <property type="entry name" value="Tetraspanin_EC2_sf"/>
</dbReference>
<dbReference type="Pfam" id="PF00335">
    <property type="entry name" value="Tetraspanin"/>
    <property type="match status" value="1"/>
</dbReference>
<dbReference type="PRINTS" id="PR00218">
    <property type="entry name" value="PERIPHERNRDS"/>
</dbReference>
<dbReference type="SUPFAM" id="SSF48652">
    <property type="entry name" value="Tetraspanin"/>
    <property type="match status" value="1"/>
</dbReference>
<dbReference type="PROSITE" id="PS00930">
    <property type="entry name" value="RDS_ROM1"/>
    <property type="match status" value="1"/>
</dbReference>
<protein>
    <recommendedName>
        <fullName>Rod outer segment membrane protein 1</fullName>
        <shortName>ROSP1</shortName>
    </recommendedName>
</protein>
<feature type="chain" id="PRO_0000168110" description="Rod outer segment membrane protein 1">
    <location>
        <begin position="1"/>
        <end position="351"/>
    </location>
</feature>
<feature type="topological domain" description="Cytoplasmic" evidence="8">
    <location>
        <begin position="1"/>
        <end position="19"/>
    </location>
</feature>
<feature type="transmembrane region" description="Helical" evidence="8">
    <location>
        <begin position="20"/>
        <end position="43"/>
    </location>
</feature>
<feature type="topological domain" description="Lumenal" evidence="8">
    <location>
        <begin position="44"/>
        <end position="64"/>
    </location>
</feature>
<feature type="transmembrane region" description="Helical" evidence="8">
    <location>
        <begin position="65"/>
        <end position="84"/>
    </location>
</feature>
<feature type="topological domain" description="Cytoplasmic" evidence="8">
    <location>
        <begin position="85"/>
        <end position="102"/>
    </location>
</feature>
<feature type="transmembrane region" description="Helical" evidence="8">
    <location>
        <begin position="103"/>
        <end position="125"/>
    </location>
</feature>
<feature type="topological domain" description="Lumenal" evidence="8">
    <location>
        <begin position="126"/>
        <end position="264"/>
    </location>
</feature>
<feature type="transmembrane region" description="Helical" evidence="8">
    <location>
        <begin position="265"/>
        <end position="286"/>
    </location>
</feature>
<feature type="topological domain" description="Cytoplasmic" evidence="8">
    <location>
        <begin position="287"/>
        <end position="351"/>
    </location>
</feature>
<feature type="region of interest" description="Disordered" evidence="3">
    <location>
        <begin position="325"/>
        <end position="351"/>
    </location>
</feature>
<feature type="compositionally biased region" description="Basic and acidic residues" evidence="3">
    <location>
        <begin position="339"/>
        <end position="351"/>
    </location>
</feature>
<feature type="sequence conflict" description="In Ref. 1; BAA11900." evidence="8" ref="1">
    <original>A</original>
    <variation>V</variation>
    <location>
        <position position="18"/>
    </location>
</feature>
<sequence length="351" mass="37418">MAPVLPLVLPLQPRIRLAQGLWLLSWLLVLVGGLTLLCSGHLLVQLWHLGTFLAPSCPFSALPQVALAASAVALGTGLVGSGASRASLDAEQYPPWRGVLGPLLVAGTAGGGGLLVLALGLALALPGTLDTGLEEGLGSALVHYKDTEVPGRCQAKRLLDELQLRHHCCGRHGYKDWFGIQWVSNRYLDPNDPDVVDRIQSNVEGLYLIDGVPFSCCNPHSPRPCLQSQLSDPHAHPLFDPRQPNLNLWSQGCHEVLLGHLQGLASTLGNMLAVTFLLQTLVLLGLRYLQTALEGLGGVIDGEGEAQGYLFPAGLKDMLKTAWLQGAGPHRPAPGETPPEEKPPKECLPEA</sequence>
<proteinExistence type="evidence at protein level"/>
<name>ROM1_BOVIN</name>
<comment type="function">
    <text evidence="1 6">Plays a role in rod outer segment (ROS) morphogenesis (By similarity). May play a role with PRPH2 in the maintenance of the structure of ROS curved disks (PubMed:24196967). Plays a role in the organization of the ROS and maintenance of ROS disk diameter (By similarity). Involved in the maintenance of the retina outer nuclear layer (By similarity).</text>
</comment>
<comment type="subunit">
    <text evidence="1 4 5 6">Homodimer; disulfide-linked (PubMed:1610568). Forms a homotetramer (PubMed:10681511). Forms a heterotetramer with PRPH2 (PubMed:10681511, PubMed:1610568, PubMed:24196967). Homotetramer and heterotetramer core complexes go on to form higher order complexes by formation of intermolecular disulfide bonds (PubMed:10681511). Interacts with STX3 (By similarity). Interacts with SNAP25 (By similarity).</text>
</comment>
<comment type="interaction">
    <interactant intactId="EBI-8176947">
        <id>P52205</id>
    </interactant>
    <interactant intactId="EBI-722747">
        <id>P43250</id>
        <label>GRK6</label>
    </interactant>
    <organismsDiffer>true</organismsDiffer>
    <experiments>9</experiments>
</comment>
<comment type="subcellular location">
    <subcellularLocation>
        <location evidence="1">Photoreceptor inner segment membrane</location>
        <topology evidence="2">Multi-pass membrane protein</topology>
    </subcellularLocation>
    <subcellularLocation>
        <location evidence="4">Photoreceptor outer segment membrane</location>
        <topology evidence="2">Multi-pass membrane protein</topology>
    </subcellularLocation>
</comment>
<comment type="tissue specificity">
    <text evidence="4 7">Retina photoreceptor (at protein level) (PubMed:10681511, PubMed:8603840). In rim region of ROS disks (at protein level) (PubMed:10681511, PubMed:8603840).</text>
</comment>
<comment type="disease">
    <text evidence="7">May be involved in mammalian retinopathies (PubMed:8603840).</text>
</comment>
<comment type="similarity">
    <text evidence="8">Belongs to the PRPH2/ROM1 family.</text>
</comment>
<accession>P52205</accession>
<accession>Q17QV8</accession>
<accession>Q28926</accession>
<accession>Q95134</accession>
<organism>
    <name type="scientific">Bos taurus</name>
    <name type="common">Bovine</name>
    <dbReference type="NCBI Taxonomy" id="9913"/>
    <lineage>
        <taxon>Eukaryota</taxon>
        <taxon>Metazoa</taxon>
        <taxon>Chordata</taxon>
        <taxon>Craniata</taxon>
        <taxon>Vertebrata</taxon>
        <taxon>Euteleostomi</taxon>
        <taxon>Mammalia</taxon>
        <taxon>Eutheria</taxon>
        <taxon>Laurasiatheria</taxon>
        <taxon>Artiodactyla</taxon>
        <taxon>Ruminantia</taxon>
        <taxon>Pecora</taxon>
        <taxon>Bovidae</taxon>
        <taxon>Bovinae</taxon>
        <taxon>Bos</taxon>
    </lineage>
</organism>